<organism>
    <name type="scientific">Gallus gallus</name>
    <name type="common">Chicken</name>
    <dbReference type="NCBI Taxonomy" id="9031"/>
    <lineage>
        <taxon>Eukaryota</taxon>
        <taxon>Metazoa</taxon>
        <taxon>Chordata</taxon>
        <taxon>Craniata</taxon>
        <taxon>Vertebrata</taxon>
        <taxon>Euteleostomi</taxon>
        <taxon>Archelosauria</taxon>
        <taxon>Archosauria</taxon>
        <taxon>Dinosauria</taxon>
        <taxon>Saurischia</taxon>
        <taxon>Theropoda</taxon>
        <taxon>Coelurosauria</taxon>
        <taxon>Aves</taxon>
        <taxon>Neognathae</taxon>
        <taxon>Galloanserae</taxon>
        <taxon>Galliformes</taxon>
        <taxon>Phasianidae</taxon>
        <taxon>Phasianinae</taxon>
        <taxon>Gallus</taxon>
    </lineage>
</organism>
<name>CNTF_CHICK</name>
<proteinExistence type="evidence at protein level"/>
<comment type="function">
    <text>CNTF is a survival factor for various neuronal cell types. Seems to prevent the degeneration of motor axons after axotomy.</text>
</comment>
<comment type="subcellular location">
    <subcellularLocation>
        <location>Cytoplasm</location>
    </subcellularLocation>
</comment>
<comment type="tissue specificity">
    <text>Nervous system.</text>
</comment>
<comment type="similarity">
    <text evidence="1">Belongs to the CNTF family.</text>
</comment>
<dbReference type="EMBL" id="M80827">
    <property type="protein sequence ID" value="AAA48784.1"/>
    <property type="molecule type" value="mRNA"/>
</dbReference>
<dbReference type="PIR" id="JH0680">
    <property type="entry name" value="JH0680"/>
</dbReference>
<dbReference type="RefSeq" id="NP_990823.1">
    <property type="nucleotide sequence ID" value="NM_205492.1"/>
</dbReference>
<dbReference type="RefSeq" id="XP_015142256.1">
    <property type="nucleotide sequence ID" value="XM_015286770.1"/>
</dbReference>
<dbReference type="RefSeq" id="XP_046773923.1">
    <property type="nucleotide sequence ID" value="XM_046917967.1"/>
</dbReference>
<dbReference type="RefSeq" id="XP_046797481.1">
    <property type="nucleotide sequence ID" value="XM_046941525.1"/>
</dbReference>
<dbReference type="SMR" id="Q02011"/>
<dbReference type="STRING" id="9031.ENSGALP00000042605"/>
<dbReference type="PaxDb" id="9031-ENSGALP00000042605"/>
<dbReference type="Ensembl" id="ENSGALT00010063604.1">
    <property type="protein sequence ID" value="ENSGALP00010039259.1"/>
    <property type="gene ID" value="ENSGALG00010026105.1"/>
</dbReference>
<dbReference type="GeneID" id="396488"/>
<dbReference type="KEGG" id="gga:396488"/>
<dbReference type="CTD" id="1270"/>
<dbReference type="VEuPathDB" id="HostDB:geneid_396488"/>
<dbReference type="eggNOG" id="ENOG502S4XX">
    <property type="taxonomic scope" value="Eukaryota"/>
</dbReference>
<dbReference type="GeneTree" id="ENSGT00420000029890"/>
<dbReference type="HOGENOM" id="CLU_118647_0_0_1"/>
<dbReference type="InParanoid" id="Q02011"/>
<dbReference type="OMA" id="RWSEMTE"/>
<dbReference type="OrthoDB" id="9510890at2759"/>
<dbReference type="PhylomeDB" id="Q02011"/>
<dbReference type="PRO" id="PR:Q02011"/>
<dbReference type="Proteomes" id="UP000000539">
    <property type="component" value="Chromosome 5"/>
</dbReference>
<dbReference type="Bgee" id="ENSGALG00000026207">
    <property type="expression patterns" value="Expressed in liver and 8 other cell types or tissues"/>
</dbReference>
<dbReference type="GO" id="GO:0030424">
    <property type="term" value="C:axon"/>
    <property type="evidence" value="ECO:0000318"/>
    <property type="project" value="GO_Central"/>
</dbReference>
<dbReference type="GO" id="GO:0005737">
    <property type="term" value="C:cytoplasm"/>
    <property type="evidence" value="ECO:0007669"/>
    <property type="project" value="UniProtKB-SubCell"/>
</dbReference>
<dbReference type="GO" id="GO:0005615">
    <property type="term" value="C:extracellular space"/>
    <property type="evidence" value="ECO:0007669"/>
    <property type="project" value="Ensembl"/>
</dbReference>
<dbReference type="GO" id="GO:0097386">
    <property type="term" value="C:glial cell projection"/>
    <property type="evidence" value="ECO:0000318"/>
    <property type="project" value="GO_Central"/>
</dbReference>
<dbReference type="GO" id="GO:0043025">
    <property type="term" value="C:neuronal cell body"/>
    <property type="evidence" value="ECO:0000318"/>
    <property type="project" value="GO_Central"/>
</dbReference>
<dbReference type="GO" id="GO:0005127">
    <property type="term" value="F:ciliary neurotrophic factor receptor binding"/>
    <property type="evidence" value="ECO:0000318"/>
    <property type="project" value="GO_Central"/>
</dbReference>
<dbReference type="GO" id="GO:0005125">
    <property type="term" value="F:cytokine activity"/>
    <property type="evidence" value="ECO:0000318"/>
    <property type="project" value="GO_Central"/>
</dbReference>
<dbReference type="GO" id="GO:0008083">
    <property type="term" value="F:growth factor activity"/>
    <property type="evidence" value="ECO:0000318"/>
    <property type="project" value="GO_Central"/>
</dbReference>
<dbReference type="GO" id="GO:0005138">
    <property type="term" value="F:interleukin-6 receptor binding"/>
    <property type="evidence" value="ECO:0007669"/>
    <property type="project" value="Ensembl"/>
</dbReference>
<dbReference type="GO" id="GO:0044877">
    <property type="term" value="F:protein-containing complex binding"/>
    <property type="evidence" value="ECO:0007669"/>
    <property type="project" value="Ensembl"/>
</dbReference>
<dbReference type="GO" id="GO:0048143">
    <property type="term" value="P:astrocyte activation"/>
    <property type="evidence" value="ECO:0000318"/>
    <property type="project" value="GO_Central"/>
</dbReference>
<dbReference type="GO" id="GO:0007259">
    <property type="term" value="P:cell surface receptor signaling pathway via JAK-STAT"/>
    <property type="evidence" value="ECO:0000318"/>
    <property type="project" value="GO_Central"/>
</dbReference>
<dbReference type="GO" id="GO:0070120">
    <property type="term" value="P:ciliary neurotrophic factor-mediated signaling pathway"/>
    <property type="evidence" value="ECO:0000318"/>
    <property type="project" value="GO_Central"/>
</dbReference>
<dbReference type="GO" id="GO:0048644">
    <property type="term" value="P:muscle organ morphogenesis"/>
    <property type="evidence" value="ECO:0007669"/>
    <property type="project" value="Ensembl"/>
</dbReference>
<dbReference type="GO" id="GO:0043524">
    <property type="term" value="P:negative regulation of neuron apoptotic process"/>
    <property type="evidence" value="ECO:0000318"/>
    <property type="project" value="GO_Central"/>
</dbReference>
<dbReference type="GO" id="GO:0046533">
    <property type="term" value="P:negative regulation of photoreceptor cell differentiation"/>
    <property type="evidence" value="ECO:0007669"/>
    <property type="project" value="Ensembl"/>
</dbReference>
<dbReference type="GO" id="GO:0048666">
    <property type="term" value="P:neuron development"/>
    <property type="evidence" value="ECO:0007669"/>
    <property type="project" value="Ensembl"/>
</dbReference>
<dbReference type="GO" id="GO:0048680">
    <property type="term" value="P:positive regulation of axon regeneration"/>
    <property type="evidence" value="ECO:0000318"/>
    <property type="project" value="GO_Central"/>
</dbReference>
<dbReference type="GO" id="GO:0008284">
    <property type="term" value="P:positive regulation of cell population proliferation"/>
    <property type="evidence" value="ECO:0007669"/>
    <property type="project" value="Ensembl"/>
</dbReference>
<dbReference type="GO" id="GO:0010628">
    <property type="term" value="P:positive regulation of gene expression"/>
    <property type="evidence" value="ECO:0007669"/>
    <property type="project" value="Ensembl"/>
</dbReference>
<dbReference type="GO" id="GO:0046668">
    <property type="term" value="P:regulation of retinal cell programmed cell death"/>
    <property type="evidence" value="ECO:0007669"/>
    <property type="project" value="Ensembl"/>
</dbReference>
<dbReference type="GO" id="GO:0060221">
    <property type="term" value="P:retinal rod cell differentiation"/>
    <property type="evidence" value="ECO:0007669"/>
    <property type="project" value="Ensembl"/>
</dbReference>
<dbReference type="Gene3D" id="1.20.1250.10">
    <property type="match status" value="1"/>
</dbReference>
<dbReference type="InterPro" id="IPR009079">
    <property type="entry name" value="4_helix_cytokine-like_core"/>
</dbReference>
<dbReference type="InterPro" id="IPR000151">
    <property type="entry name" value="Ciliary_neurotrophic_fac_CNTF"/>
</dbReference>
<dbReference type="PANTHER" id="PTHR15196">
    <property type="entry name" value="CILIARY NEUROTROPHIC FACTOR"/>
    <property type="match status" value="1"/>
</dbReference>
<dbReference type="PANTHER" id="PTHR15196:SF0">
    <property type="entry name" value="CILIARY NEUROTROPHIC FACTOR"/>
    <property type="match status" value="1"/>
</dbReference>
<dbReference type="Pfam" id="PF01110">
    <property type="entry name" value="CNTF"/>
    <property type="match status" value="1"/>
</dbReference>
<dbReference type="SUPFAM" id="SSF47266">
    <property type="entry name" value="4-helical cytokines"/>
    <property type="match status" value="1"/>
</dbReference>
<gene>
    <name type="primary">CNTF</name>
    <name type="synonym">CNF</name>
    <name type="synonym">GPA</name>
</gene>
<feature type="chain" id="PRO_0000149524" description="Ciliary neurotrophic factor">
    <location>
        <begin position="1"/>
        <end position="195"/>
    </location>
</feature>
<reference key="1">
    <citation type="journal article" date="1992" name="Neuron">
        <title>Cloning, expression during development, and evidence for release of a trophic factor for ciliary ganglion neurons.</title>
        <authorList>
            <person name="Leung D.W."/>
            <person name="Parent A.S."/>
            <person name="Cachianes G."/>
            <person name="Lee A.L."/>
            <person name="Nikolics K."/>
            <person name="Esch F."/>
            <person name="Coulombe J.N."/>
            <person name="Blacher R.W."/>
            <person name="Eckenstein F.P."/>
            <person name="Nishi R."/>
        </authorList>
    </citation>
    <scope>NUCLEOTIDE SEQUENCE [MRNA]</scope>
</reference>
<reference key="2">
    <citation type="journal article" date="1990" name="Neuron">
        <title>Purification and characterization of a trophic factor for embryonic peripheral neurons: comparison with fibroblast growth factors.</title>
        <authorList>
            <person name="Eckenstein F.P."/>
            <person name="Esch F."/>
            <person name="Holbert T."/>
            <person name="Blacher R.W."/>
            <person name="Nishi R."/>
        </authorList>
    </citation>
    <scope>PROTEIN SEQUENCE OF 155-175</scope>
</reference>
<evidence type="ECO:0000305" key="1"/>
<sequence length="195" mass="21330">MAAADTPSATLRHHDLCSRGIRLARKMRSDVTDLLDIYVERQGLDASISVAAVDGVPTAAVERWAEQTGTQRLLDNLAAYRAFRTLLAQMLEEQRELLGDTDAELGPALAAMLLQVSAFVYHLEELLELESRGAPAEEGSEPPAPPRLSLFEQKLRGLRVLRELAQWAVRSVRDLRQLSKHGPGSGAALGLPESQ</sequence>
<protein>
    <recommendedName>
        <fullName>Ciliary neurotrophic factor</fullName>
        <shortName>CNTF</shortName>
    </recommendedName>
    <alternativeName>
        <fullName>Growth-promoting activity</fullName>
        <shortName>GPA</shortName>
    </alternativeName>
</protein>
<keyword id="KW-0963">Cytoplasm</keyword>
<keyword id="KW-0217">Developmental protein</keyword>
<keyword id="KW-0221">Differentiation</keyword>
<keyword id="KW-0903">Direct protein sequencing</keyword>
<keyword id="KW-0339">Growth factor</keyword>
<keyword id="KW-0524">Neurogenesis</keyword>
<keyword id="KW-1185">Reference proteome</keyword>
<accession>Q02011</accession>